<organism>
    <name type="scientific">Saponaria officinalis</name>
    <name type="common">Common soapwort</name>
    <name type="synonym">Lychnis saponaria</name>
    <dbReference type="NCBI Taxonomy" id="3572"/>
    <lineage>
        <taxon>Eukaryota</taxon>
        <taxon>Viridiplantae</taxon>
        <taxon>Streptophyta</taxon>
        <taxon>Embryophyta</taxon>
        <taxon>Tracheophyta</taxon>
        <taxon>Spermatophyta</taxon>
        <taxon>Magnoliopsida</taxon>
        <taxon>eudicotyledons</taxon>
        <taxon>Gunneridae</taxon>
        <taxon>Pentapetalae</taxon>
        <taxon>Caryophyllales</taxon>
        <taxon>Caryophyllaceae</taxon>
        <taxon>Caryophylleae</taxon>
        <taxon>Saponaria</taxon>
    </lineage>
</organism>
<feature type="chain" id="PRO_0000462363" description="UDP-glucosyl transferase 73M2">
    <location>
        <begin position="1"/>
        <end position="490"/>
    </location>
</feature>
<feature type="active site" description="Proton acceptor" evidence="1">
    <location>
        <position position="20"/>
    </location>
</feature>
<feature type="active site" description="Charge relay" evidence="1">
    <location>
        <position position="124"/>
    </location>
</feature>
<feature type="binding site" evidence="2">
    <location>
        <position position="297"/>
    </location>
    <ligand>
        <name>UDP</name>
        <dbReference type="ChEBI" id="CHEBI:58223"/>
    </ligand>
</feature>
<feature type="binding site" evidence="2">
    <location>
        <position position="353"/>
    </location>
    <ligand>
        <name>UDP</name>
        <dbReference type="ChEBI" id="CHEBI:58223"/>
    </ligand>
</feature>
<feature type="binding site" evidence="2">
    <location>
        <position position="354"/>
    </location>
    <ligand>
        <name>UDP</name>
        <dbReference type="ChEBI" id="CHEBI:58223"/>
    </ligand>
</feature>
<feature type="binding site" evidence="2">
    <location>
        <position position="371"/>
    </location>
    <ligand>
        <name>UDP</name>
        <dbReference type="ChEBI" id="CHEBI:58223"/>
    </ligand>
</feature>
<feature type="binding site" evidence="2">
    <location>
        <position position="375"/>
    </location>
    <ligand>
        <name>UDP</name>
        <dbReference type="ChEBI" id="CHEBI:58223"/>
    </ligand>
</feature>
<feature type="binding site" evidence="2">
    <location>
        <position position="376"/>
    </location>
    <ligand>
        <name>UDP</name>
        <dbReference type="ChEBI" id="CHEBI:58223"/>
    </ligand>
</feature>
<feature type="binding site" evidence="2">
    <location>
        <position position="379"/>
    </location>
    <ligand>
        <name>UDP</name>
        <dbReference type="ChEBI" id="CHEBI:58223"/>
    </ligand>
</feature>
<feature type="binding site" evidence="2">
    <location>
        <position position="393"/>
    </location>
    <ligand>
        <name>UDP</name>
        <dbReference type="ChEBI" id="CHEBI:58223"/>
    </ligand>
</feature>
<gene>
    <name evidence="4" type="primary">UGT73M2</name>
    <name evidence="4" type="synonym">Saoffv11038856m</name>
    <name evidence="6" type="ORF">RND81_08G000600</name>
</gene>
<comment type="function">
    <text evidence="3">Component of the oleanane-type triterpene saponins (e.g. saponarioside A and saponarioside B) biosynthetic pathway, leading to the production of natural products with detergent properties used as traditional sources of soap (PubMed:39043959). A glycosyltransferase that mediates the conversion of QA-triFRX to QA-triFRXX via the elongation of the C-28 sugar chain with a D-xylose (PubMed:39043959).</text>
</comment>
<comment type="pathway">
    <text evidence="3">Secondary metabolite biosynthesis; terpenoid biosynthesis.</text>
</comment>
<comment type="tissue specificity">
    <text evidence="3">Mainly expressed in flowers, flower buds and young leaves, and, to a lesser extent, in old leaves, stems and roots.</text>
</comment>
<comment type="biotechnology">
    <text evidence="4">Soapwort saponins possess anticancer properties and are also being explored as enhancers for endosomal escape in targeted tumor therapies (PubMed:39043959). They may also serve as precursors for vaccine adjuvants (PubMed:39043959).</text>
</comment>
<comment type="similarity">
    <text evidence="5">Belongs to the UDP-glycosyltransferase family.</text>
</comment>
<evidence type="ECO:0000250" key="1">
    <source>
        <dbReference type="UniProtKB" id="A0A0A1HA03"/>
    </source>
</evidence>
<evidence type="ECO:0000250" key="2">
    <source>
        <dbReference type="UniProtKB" id="Q9M156"/>
    </source>
</evidence>
<evidence type="ECO:0000269" key="3">
    <source>
    </source>
</evidence>
<evidence type="ECO:0000303" key="4">
    <source>
    </source>
</evidence>
<evidence type="ECO:0000305" key="5"/>
<evidence type="ECO:0000312" key="6">
    <source>
        <dbReference type="EMBL" id="KAK9696842.1"/>
    </source>
</evidence>
<evidence type="ECO:0000312" key="7">
    <source>
        <dbReference type="EMBL" id="WWM48153.1"/>
    </source>
</evidence>
<protein>
    <recommendedName>
        <fullName evidence="4">UDP-glucosyl transferase 73M2</fullName>
        <shortName evidence="4">SoUGT73M2</shortName>
        <ecNumber evidence="3">2.4.1.-</ecNumber>
    </recommendedName>
</protein>
<sequence>MEESKEEVHVAFFPFMTPGHSIPMLDLVRLFIARGVKTTVFTTPLNAPNISKYLNIIQDSSSNKNTIYVTPFPSKEAGLPEGVESQDSTTSPEMTLKFFVAMELLQDPLDVFLKETKPHCLVADNFFPYATDIASKYGIPRFVFQFTGFFPMSVMMALNRFHPQNSVSSDDDPFLVPSLPHDIKLTKSQLQREYEGSDGIDTALSRLCNGAGRALFTSYGVIFNSFYQLEPDYVDYYTNTMGKRSRVWHVGPVSLCNRRHVEGKSGRGRSASISEHLCLEWLNAKEPNSVIYVCFGSLTCFSNEQLKEIATALERCEEYFIWVLKGGKDNEQEWLPQGFEERVEGKGLIIRGWAPQVLILDHEAIGGFVTHCGWNSTLESISAGVPMVTWPIYAEQFYNEKLVTDVLKVGVKVGSMKWSETTGATHLKHEEIEKALKQIMVGEEVLEMRKRASKLKEMAYNAVEEGGSSYSHLTSLIDDLMASKAVLQKF</sequence>
<dbReference type="EC" id="2.4.1.-" evidence="3"/>
<dbReference type="EMBL" id="OR426400">
    <property type="protein sequence ID" value="WWM48153.1"/>
    <property type="molecule type" value="mRNA"/>
</dbReference>
<dbReference type="EMBL" id="JBDFQZ010000008">
    <property type="protein sequence ID" value="KAK9696842.1"/>
    <property type="molecule type" value="Genomic_DNA"/>
</dbReference>
<dbReference type="UniPathway" id="UPA00213"/>
<dbReference type="Proteomes" id="UP001443914">
    <property type="component" value="Unassembled WGS sequence"/>
</dbReference>
<dbReference type="GO" id="GO:0035251">
    <property type="term" value="F:UDP-glucosyltransferase activity"/>
    <property type="evidence" value="ECO:0007669"/>
    <property type="project" value="UniProtKB-ARBA"/>
</dbReference>
<dbReference type="GO" id="GO:0008194">
    <property type="term" value="F:UDP-glycosyltransferase activity"/>
    <property type="evidence" value="ECO:0000314"/>
    <property type="project" value="UniProtKB"/>
</dbReference>
<dbReference type="GO" id="GO:0070085">
    <property type="term" value="P:glycosylation"/>
    <property type="evidence" value="ECO:0000314"/>
    <property type="project" value="UniProtKB"/>
</dbReference>
<dbReference type="GO" id="GO:0016135">
    <property type="term" value="P:saponin biosynthetic process"/>
    <property type="evidence" value="ECO:0000314"/>
    <property type="project" value="UniProtKB"/>
</dbReference>
<dbReference type="GO" id="GO:0016104">
    <property type="term" value="P:triterpenoid biosynthetic process"/>
    <property type="evidence" value="ECO:0000314"/>
    <property type="project" value="UniProtKB"/>
</dbReference>
<dbReference type="CDD" id="cd03784">
    <property type="entry name" value="GT1_Gtf-like"/>
    <property type="match status" value="1"/>
</dbReference>
<dbReference type="FunFam" id="3.40.50.2000:FF:000047">
    <property type="entry name" value="Glycosyltransferase"/>
    <property type="match status" value="1"/>
</dbReference>
<dbReference type="Gene3D" id="3.40.50.2000">
    <property type="entry name" value="Glycogen Phosphorylase B"/>
    <property type="match status" value="2"/>
</dbReference>
<dbReference type="InterPro" id="IPR002213">
    <property type="entry name" value="UDP_glucos_trans"/>
</dbReference>
<dbReference type="InterPro" id="IPR035595">
    <property type="entry name" value="UDP_glycos_trans_CS"/>
</dbReference>
<dbReference type="PANTHER" id="PTHR48047">
    <property type="entry name" value="GLYCOSYLTRANSFERASE"/>
    <property type="match status" value="1"/>
</dbReference>
<dbReference type="PANTHER" id="PTHR48047:SF45">
    <property type="entry name" value="SCOPOLETIN GLUCOSYLTRANSFERASE-LIKE"/>
    <property type="match status" value="1"/>
</dbReference>
<dbReference type="Pfam" id="PF00201">
    <property type="entry name" value="UDPGT"/>
    <property type="match status" value="1"/>
</dbReference>
<dbReference type="SUPFAM" id="SSF53756">
    <property type="entry name" value="UDP-Glycosyltransferase/glycogen phosphorylase"/>
    <property type="match status" value="1"/>
</dbReference>
<dbReference type="PROSITE" id="PS00375">
    <property type="entry name" value="UDPGT"/>
    <property type="match status" value="1"/>
</dbReference>
<name>GT732_SAPOF</name>
<accession>A0AAW1J1B8</accession>
<reference evidence="7" key="1">
    <citation type="journal article" date="2025" name="Nat. Chem. Biol.">
        <title>Unlocking saponin biosynthesis in soapwort.</title>
        <authorList>
            <person name="Jo S."/>
            <person name="El-Demerdash A."/>
            <person name="Owen C."/>
            <person name="Srivastava V."/>
            <person name="Wu D."/>
            <person name="Kikuchi S."/>
            <person name="Reed J."/>
            <person name="Hodgson H."/>
            <person name="Harkess A."/>
            <person name="Shu S."/>
            <person name="Plott C."/>
            <person name="Jenkins J."/>
            <person name="Williams M."/>
            <person name="Boston L.-B."/>
            <person name="Lacchini E."/>
            <person name="Qu T."/>
            <person name="Goossens A."/>
            <person name="Grimwood J."/>
            <person name="Schmutz J."/>
            <person name="Leebens-Mack J."/>
            <person name="Osbourn A."/>
        </authorList>
    </citation>
    <scope>NUCLEOTIDE SEQUENCE [MRNA]</scope>
    <scope>FUNCTION</scope>
    <scope>CATALYTIC ACTIVITY</scope>
    <scope>TISSUE SPECIFICITY</scope>
    <scope>PATHWAY</scope>
    <scope>BIOTECHNOLOGY</scope>
</reference>
<reference evidence="6" key="2">
    <citation type="submission" date="2024-03" db="EMBL/GenBank/DDBJ databases">
        <title>WGS assembly of Saponaria officinalis var. Norfolk2.</title>
        <authorList>
            <person name="Jenkins J."/>
            <person name="Shu S."/>
            <person name="Grimwood J."/>
            <person name="Barry K."/>
            <person name="Goodstein D."/>
            <person name="Schmutz J."/>
            <person name="Leebens-Mack J."/>
            <person name="Osbourn A."/>
        </authorList>
    </citation>
    <scope>NUCLEOTIDE SEQUENCE [LARGE SCALE GENOMIC DNA]</scope>
    <source>
        <strain>cv. Norfolk2</strain>
        <tissue>Leaf</tissue>
    </source>
</reference>
<keyword id="KW-0328">Glycosyltransferase</keyword>
<keyword id="KW-0808">Transferase</keyword>
<proteinExistence type="evidence at protein level"/>